<evidence type="ECO:0000255" key="1">
    <source>
        <dbReference type="HAMAP-Rule" id="MF_00170"/>
    </source>
</evidence>
<organism>
    <name type="scientific">Enterococcus faecalis (strain ATCC 700802 / V583)</name>
    <dbReference type="NCBI Taxonomy" id="226185"/>
    <lineage>
        <taxon>Bacteria</taxon>
        <taxon>Bacillati</taxon>
        <taxon>Bacillota</taxon>
        <taxon>Bacilli</taxon>
        <taxon>Lactobacillales</taxon>
        <taxon>Enterococcaceae</taxon>
        <taxon>Enterococcus</taxon>
    </lineage>
</organism>
<sequence length="226" mass="24432">MNLKQMVGIEAAKYVEDGMIVGLGTGSTAKFMVDEIGRRVKEEGLSIVGVTTSKETEKQALALGIPLKSIDEVPYVDLTIDGADEISADFQGIKGGGAALLFEKIVATYSKKCIWIVDKSKMVDDLGAFPLPVEVVPYGSRQLVHLFEEKGYHPTLRLNAAGETLITDGGHHIIDLHLEKITDPEALGSYLDNLVGVVEHGLFLNMVSMVIVGYEDGPKTLHVPAR</sequence>
<name>RPIA_ENTFA</name>
<proteinExistence type="inferred from homology"/>
<dbReference type="EC" id="5.3.1.6" evidence="1"/>
<dbReference type="EMBL" id="AE016830">
    <property type="protein sequence ID" value="AAO80067.1"/>
    <property type="molecule type" value="Genomic_DNA"/>
</dbReference>
<dbReference type="RefSeq" id="NP_813996.1">
    <property type="nucleotide sequence ID" value="NC_004668.1"/>
</dbReference>
<dbReference type="RefSeq" id="WP_002363468.1">
    <property type="nucleotide sequence ID" value="NZ_KE136524.1"/>
</dbReference>
<dbReference type="SMR" id="Q839H2"/>
<dbReference type="STRING" id="226185.EF_0197"/>
<dbReference type="EnsemblBacteria" id="AAO80067">
    <property type="protein sequence ID" value="AAO80067"/>
    <property type="gene ID" value="EF_0197"/>
</dbReference>
<dbReference type="GeneID" id="60892693"/>
<dbReference type="KEGG" id="efa:EF0197"/>
<dbReference type="PATRIC" id="fig|226185.45.peg.69"/>
<dbReference type="eggNOG" id="COG0120">
    <property type="taxonomic scope" value="Bacteria"/>
</dbReference>
<dbReference type="HOGENOM" id="CLU_056590_1_0_9"/>
<dbReference type="UniPathway" id="UPA00115">
    <property type="reaction ID" value="UER00412"/>
</dbReference>
<dbReference type="Proteomes" id="UP000001415">
    <property type="component" value="Chromosome"/>
</dbReference>
<dbReference type="GO" id="GO:0005829">
    <property type="term" value="C:cytosol"/>
    <property type="evidence" value="ECO:0007669"/>
    <property type="project" value="TreeGrafter"/>
</dbReference>
<dbReference type="GO" id="GO:0004751">
    <property type="term" value="F:ribose-5-phosphate isomerase activity"/>
    <property type="evidence" value="ECO:0007669"/>
    <property type="project" value="UniProtKB-UniRule"/>
</dbReference>
<dbReference type="GO" id="GO:0006014">
    <property type="term" value="P:D-ribose metabolic process"/>
    <property type="evidence" value="ECO:0007669"/>
    <property type="project" value="TreeGrafter"/>
</dbReference>
<dbReference type="GO" id="GO:0009052">
    <property type="term" value="P:pentose-phosphate shunt, non-oxidative branch"/>
    <property type="evidence" value="ECO:0007669"/>
    <property type="project" value="UniProtKB-UniRule"/>
</dbReference>
<dbReference type="CDD" id="cd01398">
    <property type="entry name" value="RPI_A"/>
    <property type="match status" value="1"/>
</dbReference>
<dbReference type="FunFam" id="3.40.50.1360:FF:000001">
    <property type="entry name" value="Ribose-5-phosphate isomerase A"/>
    <property type="match status" value="1"/>
</dbReference>
<dbReference type="Gene3D" id="3.30.70.260">
    <property type="match status" value="1"/>
</dbReference>
<dbReference type="Gene3D" id="3.40.50.1360">
    <property type="match status" value="1"/>
</dbReference>
<dbReference type="HAMAP" id="MF_00170">
    <property type="entry name" value="Rib_5P_isom_A"/>
    <property type="match status" value="1"/>
</dbReference>
<dbReference type="InterPro" id="IPR037171">
    <property type="entry name" value="NagB/RpiA_transferase-like"/>
</dbReference>
<dbReference type="InterPro" id="IPR020672">
    <property type="entry name" value="Ribose5P_isomerase_typA_subgr"/>
</dbReference>
<dbReference type="InterPro" id="IPR004788">
    <property type="entry name" value="Ribose5P_isomerase_type_A"/>
</dbReference>
<dbReference type="NCBIfam" id="NF001924">
    <property type="entry name" value="PRK00702.1"/>
    <property type="match status" value="1"/>
</dbReference>
<dbReference type="NCBIfam" id="TIGR00021">
    <property type="entry name" value="rpiA"/>
    <property type="match status" value="1"/>
</dbReference>
<dbReference type="PANTHER" id="PTHR11934">
    <property type="entry name" value="RIBOSE-5-PHOSPHATE ISOMERASE"/>
    <property type="match status" value="1"/>
</dbReference>
<dbReference type="PANTHER" id="PTHR11934:SF0">
    <property type="entry name" value="RIBOSE-5-PHOSPHATE ISOMERASE"/>
    <property type="match status" value="1"/>
</dbReference>
<dbReference type="Pfam" id="PF06026">
    <property type="entry name" value="Rib_5-P_isom_A"/>
    <property type="match status" value="1"/>
</dbReference>
<dbReference type="SUPFAM" id="SSF75445">
    <property type="entry name" value="D-ribose-5-phosphate isomerase (RpiA), lid domain"/>
    <property type="match status" value="1"/>
</dbReference>
<dbReference type="SUPFAM" id="SSF100950">
    <property type="entry name" value="NagB/RpiA/CoA transferase-like"/>
    <property type="match status" value="1"/>
</dbReference>
<feature type="chain" id="PRO_0000158417" description="Ribose-5-phosphate isomerase A">
    <location>
        <begin position="1"/>
        <end position="226"/>
    </location>
</feature>
<feature type="active site" description="Proton acceptor" evidence="1">
    <location>
        <position position="103"/>
    </location>
</feature>
<feature type="binding site" evidence="1">
    <location>
        <begin position="25"/>
        <end position="28"/>
    </location>
    <ligand>
        <name>substrate</name>
    </ligand>
</feature>
<feature type="binding site" evidence="1">
    <location>
        <begin position="81"/>
        <end position="84"/>
    </location>
    <ligand>
        <name>substrate</name>
    </ligand>
</feature>
<feature type="binding site" evidence="1">
    <location>
        <begin position="94"/>
        <end position="97"/>
    </location>
    <ligand>
        <name>substrate</name>
    </ligand>
</feature>
<feature type="binding site" evidence="1">
    <location>
        <position position="121"/>
    </location>
    <ligand>
        <name>substrate</name>
    </ligand>
</feature>
<protein>
    <recommendedName>
        <fullName evidence="1">Ribose-5-phosphate isomerase A</fullName>
        <ecNumber evidence="1">5.3.1.6</ecNumber>
    </recommendedName>
    <alternativeName>
        <fullName evidence="1">Phosphoriboisomerase A</fullName>
        <shortName evidence="1">PRI</shortName>
    </alternativeName>
</protein>
<accession>Q839H2</accession>
<comment type="function">
    <text evidence="1">Catalyzes the reversible conversion of ribose-5-phosphate to ribulose 5-phosphate.</text>
</comment>
<comment type="catalytic activity">
    <reaction evidence="1">
        <text>aldehydo-D-ribose 5-phosphate = D-ribulose 5-phosphate</text>
        <dbReference type="Rhea" id="RHEA:14657"/>
        <dbReference type="ChEBI" id="CHEBI:58121"/>
        <dbReference type="ChEBI" id="CHEBI:58273"/>
        <dbReference type="EC" id="5.3.1.6"/>
    </reaction>
</comment>
<comment type="pathway">
    <text evidence="1">Carbohydrate degradation; pentose phosphate pathway; D-ribose 5-phosphate from D-ribulose 5-phosphate (non-oxidative stage): step 1/1.</text>
</comment>
<comment type="subunit">
    <text evidence="1">Homodimer.</text>
</comment>
<comment type="similarity">
    <text evidence="1">Belongs to the ribose 5-phosphate isomerase family.</text>
</comment>
<gene>
    <name evidence="1" type="primary">rpiA</name>
    <name type="ordered locus">EF_0197</name>
</gene>
<reference key="1">
    <citation type="journal article" date="2003" name="Science">
        <title>Role of mobile DNA in the evolution of vancomycin-resistant Enterococcus faecalis.</title>
        <authorList>
            <person name="Paulsen I.T."/>
            <person name="Banerjei L."/>
            <person name="Myers G.S.A."/>
            <person name="Nelson K.E."/>
            <person name="Seshadri R."/>
            <person name="Read T.D."/>
            <person name="Fouts D.E."/>
            <person name="Eisen J.A."/>
            <person name="Gill S.R."/>
            <person name="Heidelberg J.F."/>
            <person name="Tettelin H."/>
            <person name="Dodson R.J."/>
            <person name="Umayam L.A."/>
            <person name="Brinkac L.M."/>
            <person name="Beanan M.J."/>
            <person name="Daugherty S.C."/>
            <person name="DeBoy R.T."/>
            <person name="Durkin S.A."/>
            <person name="Kolonay J.F."/>
            <person name="Madupu R."/>
            <person name="Nelson W.C."/>
            <person name="Vamathevan J.J."/>
            <person name="Tran B."/>
            <person name="Upton J."/>
            <person name="Hansen T."/>
            <person name="Shetty J."/>
            <person name="Khouri H.M."/>
            <person name="Utterback T.R."/>
            <person name="Radune D."/>
            <person name="Ketchum K.A."/>
            <person name="Dougherty B.A."/>
            <person name="Fraser C.M."/>
        </authorList>
    </citation>
    <scope>NUCLEOTIDE SEQUENCE [LARGE SCALE GENOMIC DNA]</scope>
    <source>
        <strain>ATCC 700802 / V583</strain>
    </source>
</reference>
<keyword id="KW-0413">Isomerase</keyword>
<keyword id="KW-1185">Reference proteome</keyword>